<name>G6PI2_CHRVO</name>
<keyword id="KW-0963">Cytoplasm</keyword>
<keyword id="KW-0312">Gluconeogenesis</keyword>
<keyword id="KW-0324">Glycolysis</keyword>
<keyword id="KW-0413">Isomerase</keyword>
<keyword id="KW-1185">Reference proteome</keyword>
<sequence length="550" mass="61928">MAAQRHIDINSTQVWAKLHQHQRATRHMHMRELFELDPQRFQRFSLELDGLLLDYSKNRVTERTLELLFDLARKADLRGWMDRMRSGERINVSENRSVLHTALRLPAGARLDLEGHNVAADVHQVLARLKDFSEQVREGRWLGFAGQPIRDVVNLGIGGSDLGPLVAADALAAYAHPDLKVHFVSNVDGQHLARTLERLNPATTLFIVASKSFTTPETLLNAQAARAWFLQAAGEAQIAKHFVAVSTNEPAVRAFGIDPQHMFGFWDWVGGRYSVWSAIGLPVMLSIGYDNFRAFLDGGHAMDRHFFESPFDANMPVLLALIGIWYNTFYRAHTHAIMPYDHGLRRLPAHIQQLDMESNGKRVGRLGEALDFDTGPVIWGEEGANSQHAFFQLLHQGTRLVPCDFILPLNSHYPLGNQHDVLVANCLAQTEALMRGKNEAEVMRELSHLSGEQLDMLLPQKLFPGNQPSNTLALDRVTPYSMGMLMALYEHKVFVQGVIWGINSFDQWGVEYGKQLARRILPELSGDTGALGHDSSTNGLIRHYRERHGK</sequence>
<accession>Q7NVH4</accession>
<organism>
    <name type="scientific">Chromobacterium violaceum (strain ATCC 12472 / DSM 30191 / JCM 1249 / CCUG 213 / NBRC 12614 / NCIMB 9131 / NCTC 9757 / MK)</name>
    <dbReference type="NCBI Taxonomy" id="243365"/>
    <lineage>
        <taxon>Bacteria</taxon>
        <taxon>Pseudomonadati</taxon>
        <taxon>Pseudomonadota</taxon>
        <taxon>Betaproteobacteria</taxon>
        <taxon>Neisseriales</taxon>
        <taxon>Chromobacteriaceae</taxon>
        <taxon>Chromobacterium</taxon>
    </lineage>
</organism>
<gene>
    <name evidence="1" type="primary">pgi2</name>
    <name type="ordered locus">CV_2369</name>
</gene>
<feature type="chain" id="PRO_0000180625" description="Glucose-6-phosphate isomerase 2">
    <location>
        <begin position="1"/>
        <end position="550"/>
    </location>
</feature>
<feature type="region of interest" description="Disordered" evidence="2">
    <location>
        <begin position="527"/>
        <end position="550"/>
    </location>
</feature>
<feature type="active site" description="Proton donor" evidence="1">
    <location>
        <position position="357"/>
    </location>
</feature>
<feature type="active site" evidence="1">
    <location>
        <position position="388"/>
    </location>
</feature>
<feature type="active site" evidence="1">
    <location>
        <position position="514"/>
    </location>
</feature>
<proteinExistence type="inferred from homology"/>
<reference key="1">
    <citation type="journal article" date="2003" name="Proc. Natl. Acad. Sci. U.S.A.">
        <title>The complete genome sequence of Chromobacterium violaceum reveals remarkable and exploitable bacterial adaptability.</title>
        <authorList>
            <person name="Vasconcelos A.T.R."/>
            <person name="de Almeida D.F."/>
            <person name="Hungria M."/>
            <person name="Guimaraes C.T."/>
            <person name="Antonio R.V."/>
            <person name="Almeida F.C."/>
            <person name="de Almeida L.G.P."/>
            <person name="de Almeida R."/>
            <person name="Alves-Gomes J.A."/>
            <person name="Andrade E.M."/>
            <person name="Araripe J."/>
            <person name="de Araujo M.F.F."/>
            <person name="Astolfi-Filho S."/>
            <person name="Azevedo V."/>
            <person name="Baptista A.J."/>
            <person name="Bataus L.A.M."/>
            <person name="Batista J.S."/>
            <person name="Belo A."/>
            <person name="van den Berg C."/>
            <person name="Bogo M."/>
            <person name="Bonatto S."/>
            <person name="Bordignon J."/>
            <person name="Brigido M.M."/>
            <person name="Brito C.A."/>
            <person name="Brocchi M."/>
            <person name="Burity H.A."/>
            <person name="Camargo A.A."/>
            <person name="Cardoso D.D.P."/>
            <person name="Carneiro N.P."/>
            <person name="Carraro D.M."/>
            <person name="Carvalho C.M.B."/>
            <person name="Cascardo J.C.M."/>
            <person name="Cavada B.S."/>
            <person name="Chueire L.M.O."/>
            <person name="Creczynski-Pasa T.B."/>
            <person name="Cunha-Junior N.C."/>
            <person name="Fagundes N."/>
            <person name="Falcao C.L."/>
            <person name="Fantinatti F."/>
            <person name="Farias I.P."/>
            <person name="Felipe M.S.S."/>
            <person name="Ferrari L.P."/>
            <person name="Ferro J.A."/>
            <person name="Ferro M.I.T."/>
            <person name="Franco G.R."/>
            <person name="Freitas N.S.A."/>
            <person name="Furlan L.R."/>
            <person name="Gazzinelli R.T."/>
            <person name="Gomes E.A."/>
            <person name="Goncalves P.R."/>
            <person name="Grangeiro T.B."/>
            <person name="Grattapaglia D."/>
            <person name="Grisard E.C."/>
            <person name="Hanna E.S."/>
            <person name="Jardim S.N."/>
            <person name="Laurino J."/>
            <person name="Leoi L.C.T."/>
            <person name="Lima L.F.A."/>
            <person name="Loureiro M.F."/>
            <person name="Lyra M.C.C.P."/>
            <person name="Madeira H.M.F."/>
            <person name="Manfio G.P."/>
            <person name="Maranhao A.Q."/>
            <person name="Martins W.S."/>
            <person name="di Mauro S.M.Z."/>
            <person name="de Medeiros S.R.B."/>
            <person name="Meissner R.V."/>
            <person name="Moreira M.A.M."/>
            <person name="Nascimento F.F."/>
            <person name="Nicolas M.F."/>
            <person name="Oliveira J.G."/>
            <person name="Oliveira S.C."/>
            <person name="Paixao R.F.C."/>
            <person name="Parente J.A."/>
            <person name="Pedrosa F.O."/>
            <person name="Pena S.D.J."/>
            <person name="Pereira J.O."/>
            <person name="Pereira M."/>
            <person name="Pinto L.S.R.C."/>
            <person name="Pinto L.S."/>
            <person name="Porto J.I.R."/>
            <person name="Potrich D.P."/>
            <person name="Ramalho-Neto C.E."/>
            <person name="Reis A.M.M."/>
            <person name="Rigo L.U."/>
            <person name="Rondinelli E."/>
            <person name="Santos E.B.P."/>
            <person name="Santos F.R."/>
            <person name="Schneider M.P.C."/>
            <person name="Seuanez H.N."/>
            <person name="Silva A.M.R."/>
            <person name="da Silva A.L.C."/>
            <person name="Silva D.W."/>
            <person name="Silva R."/>
            <person name="Simoes I.C."/>
            <person name="Simon D."/>
            <person name="Soares C.M.A."/>
            <person name="Soares R.B.A."/>
            <person name="Souza E.M."/>
            <person name="Souza K.R.L."/>
            <person name="Souza R.C."/>
            <person name="Steffens M.B.R."/>
            <person name="Steindel M."/>
            <person name="Teixeira S.R."/>
            <person name="Urmenyi T."/>
            <person name="Vettore A."/>
            <person name="Wassem R."/>
            <person name="Zaha A."/>
            <person name="Simpson A.J.G."/>
        </authorList>
    </citation>
    <scope>NUCLEOTIDE SEQUENCE [LARGE SCALE GENOMIC DNA]</scope>
    <source>
        <strain>ATCC 12472 / DSM 30191 / JCM 1249 / CCUG 213 / NBRC 12614 / NCIMB 9131 / NCTC 9757 / MK</strain>
    </source>
</reference>
<comment type="function">
    <text evidence="1">Catalyzes the reversible isomerization of glucose-6-phosphate to fructose-6-phosphate.</text>
</comment>
<comment type="catalytic activity">
    <reaction evidence="1">
        <text>alpha-D-glucose 6-phosphate = beta-D-fructose 6-phosphate</text>
        <dbReference type="Rhea" id="RHEA:11816"/>
        <dbReference type="ChEBI" id="CHEBI:57634"/>
        <dbReference type="ChEBI" id="CHEBI:58225"/>
        <dbReference type="EC" id="5.3.1.9"/>
    </reaction>
</comment>
<comment type="pathway">
    <text evidence="1">Carbohydrate biosynthesis; gluconeogenesis.</text>
</comment>
<comment type="pathway">
    <text evidence="1">Carbohydrate degradation; glycolysis; D-glyceraldehyde 3-phosphate and glycerone phosphate from D-glucose: step 2/4.</text>
</comment>
<comment type="subcellular location">
    <subcellularLocation>
        <location evidence="1">Cytoplasm</location>
    </subcellularLocation>
</comment>
<comment type="similarity">
    <text evidence="1">Belongs to the GPI family.</text>
</comment>
<protein>
    <recommendedName>
        <fullName evidence="1">Glucose-6-phosphate isomerase 2</fullName>
        <shortName evidence="1">GPI 2</shortName>
        <ecNumber evidence="1">5.3.1.9</ecNumber>
    </recommendedName>
    <alternativeName>
        <fullName evidence="1">Phosphoglucose isomerase 2</fullName>
        <shortName evidence="1">PGI 2</shortName>
    </alternativeName>
    <alternativeName>
        <fullName evidence="1">Phosphohexose isomerase 2</fullName>
        <shortName evidence="1">PHI 2</shortName>
    </alternativeName>
</protein>
<dbReference type="EC" id="5.3.1.9" evidence="1"/>
<dbReference type="EMBL" id="AE016825">
    <property type="protein sequence ID" value="AAQ60041.1"/>
    <property type="molecule type" value="Genomic_DNA"/>
</dbReference>
<dbReference type="RefSeq" id="WP_011135916.1">
    <property type="nucleotide sequence ID" value="NC_005085.1"/>
</dbReference>
<dbReference type="SMR" id="Q7NVH4"/>
<dbReference type="STRING" id="243365.CV_2369"/>
<dbReference type="KEGG" id="cvi:CV_2369"/>
<dbReference type="eggNOG" id="COG0166">
    <property type="taxonomic scope" value="Bacteria"/>
</dbReference>
<dbReference type="HOGENOM" id="CLU_017947_3_1_4"/>
<dbReference type="OrthoDB" id="140919at2"/>
<dbReference type="UniPathway" id="UPA00109">
    <property type="reaction ID" value="UER00181"/>
</dbReference>
<dbReference type="UniPathway" id="UPA00138"/>
<dbReference type="Proteomes" id="UP000001424">
    <property type="component" value="Chromosome"/>
</dbReference>
<dbReference type="GO" id="GO:0005829">
    <property type="term" value="C:cytosol"/>
    <property type="evidence" value="ECO:0007669"/>
    <property type="project" value="TreeGrafter"/>
</dbReference>
<dbReference type="GO" id="GO:0097367">
    <property type="term" value="F:carbohydrate derivative binding"/>
    <property type="evidence" value="ECO:0007669"/>
    <property type="project" value="InterPro"/>
</dbReference>
<dbReference type="GO" id="GO:0004347">
    <property type="term" value="F:glucose-6-phosphate isomerase activity"/>
    <property type="evidence" value="ECO:0007669"/>
    <property type="project" value="UniProtKB-UniRule"/>
</dbReference>
<dbReference type="GO" id="GO:0048029">
    <property type="term" value="F:monosaccharide binding"/>
    <property type="evidence" value="ECO:0007669"/>
    <property type="project" value="TreeGrafter"/>
</dbReference>
<dbReference type="GO" id="GO:0006094">
    <property type="term" value="P:gluconeogenesis"/>
    <property type="evidence" value="ECO:0007669"/>
    <property type="project" value="UniProtKB-UniRule"/>
</dbReference>
<dbReference type="GO" id="GO:0051156">
    <property type="term" value="P:glucose 6-phosphate metabolic process"/>
    <property type="evidence" value="ECO:0007669"/>
    <property type="project" value="TreeGrafter"/>
</dbReference>
<dbReference type="GO" id="GO:0006096">
    <property type="term" value="P:glycolytic process"/>
    <property type="evidence" value="ECO:0007669"/>
    <property type="project" value="UniProtKB-UniRule"/>
</dbReference>
<dbReference type="CDD" id="cd05015">
    <property type="entry name" value="SIS_PGI_1"/>
    <property type="match status" value="1"/>
</dbReference>
<dbReference type="CDD" id="cd05016">
    <property type="entry name" value="SIS_PGI_2"/>
    <property type="match status" value="1"/>
</dbReference>
<dbReference type="FunFam" id="1.10.1390.10:FF:000001">
    <property type="entry name" value="Glucose-6-phosphate isomerase"/>
    <property type="match status" value="1"/>
</dbReference>
<dbReference type="FunFam" id="3.40.50.10490:FF:000018">
    <property type="entry name" value="Glucose-6-phosphate isomerase"/>
    <property type="match status" value="1"/>
</dbReference>
<dbReference type="Gene3D" id="1.10.1390.10">
    <property type="match status" value="1"/>
</dbReference>
<dbReference type="Gene3D" id="3.40.50.10490">
    <property type="entry name" value="Glucose-6-phosphate isomerase like protein, domain 1"/>
    <property type="match status" value="2"/>
</dbReference>
<dbReference type="HAMAP" id="MF_00473">
    <property type="entry name" value="G6P_isomerase"/>
    <property type="match status" value="1"/>
</dbReference>
<dbReference type="InterPro" id="IPR001672">
    <property type="entry name" value="G6P_Isomerase"/>
</dbReference>
<dbReference type="InterPro" id="IPR023096">
    <property type="entry name" value="G6P_Isomerase_C"/>
</dbReference>
<dbReference type="InterPro" id="IPR018189">
    <property type="entry name" value="Phosphoglucose_isomerase_CS"/>
</dbReference>
<dbReference type="InterPro" id="IPR046348">
    <property type="entry name" value="SIS_dom_sf"/>
</dbReference>
<dbReference type="InterPro" id="IPR035476">
    <property type="entry name" value="SIS_PGI_1"/>
</dbReference>
<dbReference type="InterPro" id="IPR035482">
    <property type="entry name" value="SIS_PGI_2"/>
</dbReference>
<dbReference type="NCBIfam" id="NF001211">
    <property type="entry name" value="PRK00179.1"/>
    <property type="match status" value="1"/>
</dbReference>
<dbReference type="PANTHER" id="PTHR11469">
    <property type="entry name" value="GLUCOSE-6-PHOSPHATE ISOMERASE"/>
    <property type="match status" value="1"/>
</dbReference>
<dbReference type="PANTHER" id="PTHR11469:SF1">
    <property type="entry name" value="GLUCOSE-6-PHOSPHATE ISOMERASE"/>
    <property type="match status" value="1"/>
</dbReference>
<dbReference type="Pfam" id="PF00342">
    <property type="entry name" value="PGI"/>
    <property type="match status" value="1"/>
</dbReference>
<dbReference type="PRINTS" id="PR00662">
    <property type="entry name" value="G6PISOMERASE"/>
</dbReference>
<dbReference type="SUPFAM" id="SSF53697">
    <property type="entry name" value="SIS domain"/>
    <property type="match status" value="1"/>
</dbReference>
<dbReference type="PROSITE" id="PS00765">
    <property type="entry name" value="P_GLUCOSE_ISOMERASE_1"/>
    <property type="match status" value="1"/>
</dbReference>
<dbReference type="PROSITE" id="PS00174">
    <property type="entry name" value="P_GLUCOSE_ISOMERASE_2"/>
    <property type="match status" value="1"/>
</dbReference>
<dbReference type="PROSITE" id="PS51463">
    <property type="entry name" value="P_GLUCOSE_ISOMERASE_3"/>
    <property type="match status" value="1"/>
</dbReference>
<evidence type="ECO:0000255" key="1">
    <source>
        <dbReference type="HAMAP-Rule" id="MF_00473"/>
    </source>
</evidence>
<evidence type="ECO:0000256" key="2">
    <source>
        <dbReference type="SAM" id="MobiDB-lite"/>
    </source>
</evidence>